<comment type="function">
    <text evidence="1">The RecF protein is involved in DNA metabolism; it is required for DNA replication and normal SOS inducibility. RecF binds preferentially to single-stranded, linear DNA. It also seems to bind ATP.</text>
</comment>
<comment type="subcellular location">
    <subcellularLocation>
        <location evidence="1">Cytoplasm</location>
    </subcellularLocation>
</comment>
<comment type="similarity">
    <text evidence="1">Belongs to the RecF family.</text>
</comment>
<proteinExistence type="inferred from homology"/>
<evidence type="ECO:0000255" key="1">
    <source>
        <dbReference type="HAMAP-Rule" id="MF_00365"/>
    </source>
</evidence>
<keyword id="KW-0067">ATP-binding</keyword>
<keyword id="KW-0963">Cytoplasm</keyword>
<keyword id="KW-0227">DNA damage</keyword>
<keyword id="KW-0234">DNA repair</keyword>
<keyword id="KW-0235">DNA replication</keyword>
<keyword id="KW-0238">DNA-binding</keyword>
<keyword id="KW-0547">Nucleotide-binding</keyword>
<keyword id="KW-1185">Reference proteome</keyword>
<keyword id="KW-0742">SOS response</keyword>
<name>RECF_ACAM1</name>
<gene>
    <name evidence="1" type="primary">recF</name>
    <name type="ordered locus">AM1_1675</name>
</gene>
<sequence>MYLQQLHLIQFRNYVAQQVEFSAPKTILVGPNAQGKSNLLEAVELLSTLKSHRVSRDRDLVKDGESLSQVTATLQRESGPLDLSLTLRANGRRTVSVNSETIRRQLDFLGHLNIVQFSSLDMDLVRGGPGERRNWLDAVLVQLEPVYAHLLQQYQQVLKQRNAYLKHHRADDAPQLDPQQLVLWNQQLAASGSRVIQRRQRMLMRLVPLAGHWHQTISGHQEQLEILYTPNVSYDPQFPEQLYPQFLSQLEEKSMLEQLQGLSLVGPHRDEVTLLINGTPARQYGSQGQQRTLVLALKLAELKLIEEVVGEAPLLLLDDVLAELDLNRQNQLLDAIQTRFQTLITTTHLGAFDAKWLDSAQILTVKAGQVQFST</sequence>
<protein>
    <recommendedName>
        <fullName evidence="1">DNA replication and repair protein RecF</fullName>
    </recommendedName>
</protein>
<dbReference type="EMBL" id="CP000828">
    <property type="protein sequence ID" value="ABW26696.1"/>
    <property type="molecule type" value="Genomic_DNA"/>
</dbReference>
<dbReference type="RefSeq" id="WP_012162213.1">
    <property type="nucleotide sequence ID" value="NC_009925.1"/>
</dbReference>
<dbReference type="SMR" id="B0CB57"/>
<dbReference type="STRING" id="329726.AM1_1675"/>
<dbReference type="KEGG" id="amr:AM1_1675"/>
<dbReference type="eggNOG" id="COG1195">
    <property type="taxonomic scope" value="Bacteria"/>
</dbReference>
<dbReference type="HOGENOM" id="CLU_040267_0_1_3"/>
<dbReference type="OrthoDB" id="9803889at2"/>
<dbReference type="Proteomes" id="UP000000268">
    <property type="component" value="Chromosome"/>
</dbReference>
<dbReference type="GO" id="GO:0005737">
    <property type="term" value="C:cytoplasm"/>
    <property type="evidence" value="ECO:0007669"/>
    <property type="project" value="UniProtKB-SubCell"/>
</dbReference>
<dbReference type="GO" id="GO:0005524">
    <property type="term" value="F:ATP binding"/>
    <property type="evidence" value="ECO:0007669"/>
    <property type="project" value="UniProtKB-UniRule"/>
</dbReference>
<dbReference type="GO" id="GO:0003697">
    <property type="term" value="F:single-stranded DNA binding"/>
    <property type="evidence" value="ECO:0007669"/>
    <property type="project" value="UniProtKB-UniRule"/>
</dbReference>
<dbReference type="GO" id="GO:0006260">
    <property type="term" value="P:DNA replication"/>
    <property type="evidence" value="ECO:0007669"/>
    <property type="project" value="UniProtKB-UniRule"/>
</dbReference>
<dbReference type="GO" id="GO:0000731">
    <property type="term" value="P:DNA synthesis involved in DNA repair"/>
    <property type="evidence" value="ECO:0007669"/>
    <property type="project" value="TreeGrafter"/>
</dbReference>
<dbReference type="GO" id="GO:0006302">
    <property type="term" value="P:double-strand break repair"/>
    <property type="evidence" value="ECO:0007669"/>
    <property type="project" value="TreeGrafter"/>
</dbReference>
<dbReference type="GO" id="GO:0009432">
    <property type="term" value="P:SOS response"/>
    <property type="evidence" value="ECO:0007669"/>
    <property type="project" value="UniProtKB-UniRule"/>
</dbReference>
<dbReference type="CDD" id="cd03242">
    <property type="entry name" value="ABC_RecF"/>
    <property type="match status" value="1"/>
</dbReference>
<dbReference type="Gene3D" id="3.40.50.300">
    <property type="entry name" value="P-loop containing nucleotide triphosphate hydrolases"/>
    <property type="match status" value="1"/>
</dbReference>
<dbReference type="Gene3D" id="1.20.1050.90">
    <property type="entry name" value="RecF/RecN/SMC, N-terminal domain"/>
    <property type="match status" value="1"/>
</dbReference>
<dbReference type="HAMAP" id="MF_00365">
    <property type="entry name" value="RecF"/>
    <property type="match status" value="1"/>
</dbReference>
<dbReference type="InterPro" id="IPR001238">
    <property type="entry name" value="DNA-binding_RecF"/>
</dbReference>
<dbReference type="InterPro" id="IPR018078">
    <property type="entry name" value="DNA-binding_RecF_CS"/>
</dbReference>
<dbReference type="InterPro" id="IPR027417">
    <property type="entry name" value="P-loop_NTPase"/>
</dbReference>
<dbReference type="InterPro" id="IPR003395">
    <property type="entry name" value="RecF/RecN/SMC_N"/>
</dbReference>
<dbReference type="InterPro" id="IPR042174">
    <property type="entry name" value="RecF_2"/>
</dbReference>
<dbReference type="NCBIfam" id="TIGR00611">
    <property type="entry name" value="recf"/>
    <property type="match status" value="1"/>
</dbReference>
<dbReference type="PANTHER" id="PTHR32182">
    <property type="entry name" value="DNA REPLICATION AND REPAIR PROTEIN RECF"/>
    <property type="match status" value="1"/>
</dbReference>
<dbReference type="PANTHER" id="PTHR32182:SF0">
    <property type="entry name" value="DNA REPLICATION AND REPAIR PROTEIN RECF"/>
    <property type="match status" value="1"/>
</dbReference>
<dbReference type="Pfam" id="PF02463">
    <property type="entry name" value="SMC_N"/>
    <property type="match status" value="1"/>
</dbReference>
<dbReference type="SUPFAM" id="SSF52540">
    <property type="entry name" value="P-loop containing nucleoside triphosphate hydrolases"/>
    <property type="match status" value="1"/>
</dbReference>
<dbReference type="PROSITE" id="PS00617">
    <property type="entry name" value="RECF_1"/>
    <property type="match status" value="1"/>
</dbReference>
<dbReference type="PROSITE" id="PS00618">
    <property type="entry name" value="RECF_2"/>
    <property type="match status" value="1"/>
</dbReference>
<feature type="chain" id="PRO_1000079578" description="DNA replication and repair protein RecF">
    <location>
        <begin position="1"/>
        <end position="374"/>
    </location>
</feature>
<feature type="binding site" evidence="1">
    <location>
        <begin position="30"/>
        <end position="37"/>
    </location>
    <ligand>
        <name>ATP</name>
        <dbReference type="ChEBI" id="CHEBI:30616"/>
    </ligand>
</feature>
<accession>B0CB57</accession>
<organism>
    <name type="scientific">Acaryochloris marina (strain MBIC 11017)</name>
    <dbReference type="NCBI Taxonomy" id="329726"/>
    <lineage>
        <taxon>Bacteria</taxon>
        <taxon>Bacillati</taxon>
        <taxon>Cyanobacteriota</taxon>
        <taxon>Cyanophyceae</taxon>
        <taxon>Acaryochloridales</taxon>
        <taxon>Acaryochloridaceae</taxon>
        <taxon>Acaryochloris</taxon>
    </lineage>
</organism>
<reference key="1">
    <citation type="journal article" date="2008" name="Proc. Natl. Acad. Sci. U.S.A.">
        <title>Niche adaptation and genome expansion in the chlorophyll d-producing cyanobacterium Acaryochloris marina.</title>
        <authorList>
            <person name="Swingley W.D."/>
            <person name="Chen M."/>
            <person name="Cheung P.C."/>
            <person name="Conrad A.L."/>
            <person name="Dejesa L.C."/>
            <person name="Hao J."/>
            <person name="Honchak B.M."/>
            <person name="Karbach L.E."/>
            <person name="Kurdoglu A."/>
            <person name="Lahiri S."/>
            <person name="Mastrian S.D."/>
            <person name="Miyashita H."/>
            <person name="Page L."/>
            <person name="Ramakrishna P."/>
            <person name="Satoh S."/>
            <person name="Sattley W.M."/>
            <person name="Shimada Y."/>
            <person name="Taylor H.L."/>
            <person name="Tomo T."/>
            <person name="Tsuchiya T."/>
            <person name="Wang Z.T."/>
            <person name="Raymond J."/>
            <person name="Mimuro M."/>
            <person name="Blankenship R.E."/>
            <person name="Touchman J.W."/>
        </authorList>
    </citation>
    <scope>NUCLEOTIDE SEQUENCE [LARGE SCALE GENOMIC DNA]</scope>
    <source>
        <strain>MBIC 11017</strain>
    </source>
</reference>